<reference key="1">
    <citation type="journal article" date="1990" name="Photosyn. Res.">
        <title>Nucleotide sequence and expression of the two genes encoding D2 protein and the single gene encoding the CP43 protein of photosystem II in the cyanobacterium synechococcus sp. PCC7002.</title>
        <authorList>
            <person name="Gingrich J.C."/>
            <person name="Gasparich G.E."/>
            <person name="Sauer K."/>
            <person name="Bryant D.A."/>
        </authorList>
    </citation>
    <scope>NUCLEOTIDE SEQUENCE [GENOMIC DNA]</scope>
</reference>
<reference key="2">
    <citation type="journal article" date="1997" name="Mol. Microbiol.">
        <title>Temperature-regulated mRNA accumulation and stabilization for fatty acid desaturase genes in the cyanobacterium Synechococcus sp. strain PCC 7002.</title>
        <authorList>
            <person name="Sakamoto T."/>
            <person name="Bryant D.A."/>
        </authorList>
    </citation>
    <scope>NUCLEOTIDE SEQUENCE [GENOMIC DNA]</scope>
</reference>
<reference key="3">
    <citation type="submission" date="2008-02" db="EMBL/GenBank/DDBJ databases">
        <title>Complete sequence of Synechococcus sp. PCC 7002.</title>
        <authorList>
            <person name="Li T."/>
            <person name="Zhao J."/>
            <person name="Zhao C."/>
            <person name="Liu Z."/>
            <person name="Zhao F."/>
            <person name="Marquardt J."/>
            <person name="Nomura C.T."/>
            <person name="Persson S."/>
            <person name="Detter J.C."/>
            <person name="Richardson P.M."/>
            <person name="Lanz C."/>
            <person name="Schuster S.C."/>
            <person name="Wang J."/>
            <person name="Li S."/>
            <person name="Huang X."/>
            <person name="Cai T."/>
            <person name="Yu Z."/>
            <person name="Luo J."/>
            <person name="Zhao J."/>
            <person name="Bryant D.A."/>
        </authorList>
    </citation>
    <scope>NUCLEOTIDE SEQUENCE [LARGE SCALE GENOMIC DNA]</scope>
    <source>
        <strain>ATCC 27264 / PCC 7002 / PR-6</strain>
    </source>
</reference>
<comment type="function">
    <text evidence="1">Photosystem II (PSII) is a light-driven water:plastoquinone oxidoreductase that uses light energy to abstract electrons from H(2)O, generating O(2) and a proton gradient subsequently used for ATP formation. It consists of a core antenna complex that captures photons, and an electron transfer chain that converts photonic excitation into a charge separation. The D1/D2 (PsbA/PsbD) reaction center heterodimer binds P680, the primary electron donor of PSII as well as several subsequent electron acceptors. D2 is needed for assembly of a stable PSII complex.</text>
</comment>
<comment type="catalytic activity">
    <reaction evidence="1">
        <text>2 a plastoquinone + 4 hnu + 2 H2O = 2 a plastoquinol + O2</text>
        <dbReference type="Rhea" id="RHEA:36359"/>
        <dbReference type="Rhea" id="RHEA-COMP:9561"/>
        <dbReference type="Rhea" id="RHEA-COMP:9562"/>
        <dbReference type="ChEBI" id="CHEBI:15377"/>
        <dbReference type="ChEBI" id="CHEBI:15379"/>
        <dbReference type="ChEBI" id="CHEBI:17757"/>
        <dbReference type="ChEBI" id="CHEBI:30212"/>
        <dbReference type="ChEBI" id="CHEBI:62192"/>
        <dbReference type="EC" id="1.10.3.9"/>
    </reaction>
</comment>
<comment type="cofactor">
    <text evidence="1">The D1/D2 heterodimer binds P680, chlorophylls that are the primary electron donor of PSII, and subsequent electron acceptors. It shares a non-heme iron and each subunit binds pheophytin, quinone, additional chlorophylls, carotenoids and lipids. There is also a Cl(-1) ion associated with D1 and D2, which is required for oxygen evolution. The PSII complex binds additional chlorophylls, carotenoids and specific lipids.</text>
</comment>
<comment type="subunit">
    <text evidence="1">PSII is composed of 1 copy each of membrane proteins PsbA, PsbB, PsbC, PsbD, PsbE, PsbF, PsbH, PsbI, PsbJ, PsbK, PsbL, PsbM, PsbT, PsbX, PsbY, PsbZ, Psb30/Ycf12, peripheral proteins PsbO, CyanoQ (PsbQ), PsbU, PsbV and a large number of cofactors. It forms dimeric complexes.</text>
</comment>
<comment type="subcellular location">
    <subcellularLocation>
        <location evidence="1">Cellular thylakoid membrane</location>
        <topology evidence="1">Multi-pass membrane protein</topology>
    </subcellularLocation>
</comment>
<comment type="miscellaneous">
    <text evidence="1">2 of the reaction center chlorophylls (ChlD1 and ChlD2) are entirely coordinated by water.</text>
</comment>
<comment type="similarity">
    <text evidence="1">Belongs to the reaction center PufL/M/PsbA/D family.</text>
</comment>
<proteinExistence type="inferred from homology"/>
<keyword id="KW-0148">Chlorophyll</keyword>
<keyword id="KW-0157">Chromophore</keyword>
<keyword id="KW-0249">Electron transport</keyword>
<keyword id="KW-0408">Iron</keyword>
<keyword id="KW-0460">Magnesium</keyword>
<keyword id="KW-0472">Membrane</keyword>
<keyword id="KW-0479">Metal-binding</keyword>
<keyword id="KW-0560">Oxidoreductase</keyword>
<keyword id="KW-0602">Photosynthesis</keyword>
<keyword id="KW-0604">Photosystem II</keyword>
<keyword id="KW-1185">Reference proteome</keyword>
<keyword id="KW-0793">Thylakoid</keyword>
<keyword id="KW-0812">Transmembrane</keyword>
<keyword id="KW-1133">Transmembrane helix</keyword>
<keyword id="KW-0813">Transport</keyword>
<name>PSBD_PICP2</name>
<feature type="chain" id="PRO_0000090525" description="Photosystem II D2 protein">
    <location>
        <begin position="1"/>
        <end position="352"/>
    </location>
</feature>
<feature type="transmembrane region" description="Helical" evidence="1">
    <location>
        <begin position="40"/>
        <end position="60"/>
    </location>
</feature>
<feature type="transmembrane region" description="Helical" evidence="1">
    <location>
        <begin position="124"/>
        <end position="140"/>
    </location>
</feature>
<feature type="transmembrane region" description="Helical" evidence="1">
    <location>
        <begin position="152"/>
        <end position="165"/>
    </location>
</feature>
<feature type="transmembrane region" description="Helical" evidence="1">
    <location>
        <begin position="207"/>
        <end position="227"/>
    </location>
</feature>
<feature type="transmembrane region" description="Helical" evidence="1">
    <location>
        <begin position="278"/>
        <end position="294"/>
    </location>
</feature>
<feature type="binding site" description="axial binding residue" evidence="1">
    <location>
        <position position="117"/>
    </location>
    <ligand>
        <name>chlorophyll a</name>
        <dbReference type="ChEBI" id="CHEBI:58416"/>
        <label>ChlzD2</label>
    </ligand>
    <ligandPart>
        <name>Mg</name>
        <dbReference type="ChEBI" id="CHEBI:25107"/>
    </ligandPart>
</feature>
<feature type="binding site" evidence="1">
    <location>
        <position position="129"/>
    </location>
    <ligand>
        <name>pheophytin a</name>
        <dbReference type="ChEBI" id="CHEBI:136840"/>
        <label>D2</label>
    </ligand>
</feature>
<feature type="binding site" evidence="1">
    <location>
        <position position="142"/>
    </location>
    <ligand>
        <name>pheophytin a</name>
        <dbReference type="ChEBI" id="CHEBI:136840"/>
        <label>D2</label>
    </ligand>
</feature>
<feature type="binding site" description="axial binding residue" evidence="1">
    <location>
        <position position="197"/>
    </location>
    <ligand>
        <name>chlorophyll a</name>
        <dbReference type="ChEBI" id="CHEBI:58416"/>
        <label>PD2</label>
    </ligand>
    <ligandPart>
        <name>Mg</name>
        <dbReference type="ChEBI" id="CHEBI:25107"/>
    </ligandPart>
</feature>
<feature type="binding site" evidence="1">
    <location>
        <position position="214"/>
    </location>
    <ligand>
        <name>a plastoquinone</name>
        <dbReference type="ChEBI" id="CHEBI:17757"/>
        <label>Q(A)</label>
    </ligand>
</feature>
<feature type="binding site" evidence="1">
    <location>
        <position position="214"/>
    </location>
    <ligand>
        <name>Fe cation</name>
        <dbReference type="ChEBI" id="CHEBI:24875"/>
        <note>ligand shared with heterodimeric partner</note>
    </ligand>
</feature>
<feature type="binding site" evidence="1">
    <location>
        <position position="261"/>
    </location>
    <ligand>
        <name>a plastoquinone</name>
        <dbReference type="ChEBI" id="CHEBI:17757"/>
        <label>Q(A)</label>
    </ligand>
</feature>
<feature type="binding site" evidence="1">
    <location>
        <position position="268"/>
    </location>
    <ligand>
        <name>Fe cation</name>
        <dbReference type="ChEBI" id="CHEBI:24875"/>
        <note>ligand shared with heterodimeric partner</note>
    </ligand>
</feature>
<sequence length="352" mass="39600">MTIAVGRAPQERGWFDVLDDWLKRDRFVFVGWSGILLFPCAFMALGGWLTGTTFVTSWYTHGLASSYLEGCNFLTVAVSSPADSLGHSLLFLWGPEANWNFARWCQLGGLWSFVALHGAFGLIGFMLRQFEIARLVGIRPYNAIAFSGPIAVFVSVFLMYPLGQSSWFFAPSFGVAGIFRFILFLQGFHNWTLNPFHMMGVAGILGGALLCAIHGATVENTLFEDSDQANTFRAFEPTQAEETYSMVTANRFWSQIFGIAFSNKRWLHFFMLFVPVTGLWMSSVGIVGLALNLRAYDFVSQEIRAAEDPEFETFYTKNILLNEGMRAWMAPQDQIHEQFVFPEEVLPRGNAL</sequence>
<organism>
    <name type="scientific">Picosynechococcus sp. (strain ATCC 27264 / PCC 7002 / PR-6)</name>
    <name type="common">Agmenellum quadruplicatum</name>
    <dbReference type="NCBI Taxonomy" id="32049"/>
    <lineage>
        <taxon>Bacteria</taxon>
        <taxon>Bacillati</taxon>
        <taxon>Cyanobacteriota</taxon>
        <taxon>Cyanophyceae</taxon>
        <taxon>Oscillatoriophycideae</taxon>
        <taxon>Chroococcales</taxon>
        <taxon>Geminocystaceae</taxon>
        <taxon>Picosynechococcus</taxon>
    </lineage>
</organism>
<gene>
    <name evidence="1" type="primary">psbD1</name>
    <name type="ordered locus">SYNPCC7002_A1560</name>
</gene>
<gene>
    <name evidence="1" type="primary">psbD2</name>
    <name type="ordered locus">SYNPCC7002_A2199</name>
</gene>
<dbReference type="EC" id="1.10.3.9" evidence="1"/>
<dbReference type="EMBL" id="M29659">
    <property type="protein sequence ID" value="AAA79119.1"/>
    <property type="molecule type" value="Genomic_DNA"/>
</dbReference>
<dbReference type="EMBL" id="U36390">
    <property type="protein sequence ID" value="AAB61354.1"/>
    <property type="molecule type" value="Genomic_DNA"/>
</dbReference>
<dbReference type="EMBL" id="CP000951">
    <property type="protein sequence ID" value="ACA99551.1"/>
    <property type="molecule type" value="Genomic_DNA"/>
</dbReference>
<dbReference type="EMBL" id="CP000951">
    <property type="protein sequence ID" value="ACB00180.1"/>
    <property type="molecule type" value="Genomic_DNA"/>
</dbReference>
<dbReference type="SMR" id="P20898"/>
<dbReference type="STRING" id="32049.SYNPCC7002_A1560"/>
<dbReference type="KEGG" id="syp:SYNPCC7002_A1560"/>
<dbReference type="KEGG" id="syp:SYNPCC7002_A2199"/>
<dbReference type="eggNOG" id="ENOG502Z8JK">
    <property type="taxonomic scope" value="Bacteria"/>
</dbReference>
<dbReference type="HOGENOM" id="CLU_077965_0_0_3"/>
<dbReference type="Proteomes" id="UP000001688">
    <property type="component" value="Chromosome"/>
</dbReference>
<dbReference type="GO" id="GO:0009523">
    <property type="term" value="C:photosystem II"/>
    <property type="evidence" value="ECO:0007669"/>
    <property type="project" value="UniProtKB-KW"/>
</dbReference>
<dbReference type="GO" id="GO:0031676">
    <property type="term" value="C:plasma membrane-derived thylakoid membrane"/>
    <property type="evidence" value="ECO:0007669"/>
    <property type="project" value="UniProtKB-SubCell"/>
</dbReference>
<dbReference type="GO" id="GO:0016168">
    <property type="term" value="F:chlorophyll binding"/>
    <property type="evidence" value="ECO:0007669"/>
    <property type="project" value="UniProtKB-UniRule"/>
</dbReference>
<dbReference type="GO" id="GO:0045156">
    <property type="term" value="F:electron transporter, transferring electrons within the cyclic electron transport pathway of photosynthesis activity"/>
    <property type="evidence" value="ECO:0007669"/>
    <property type="project" value="InterPro"/>
</dbReference>
<dbReference type="GO" id="GO:0005506">
    <property type="term" value="F:iron ion binding"/>
    <property type="evidence" value="ECO:0007669"/>
    <property type="project" value="UniProtKB-UniRule"/>
</dbReference>
<dbReference type="GO" id="GO:0010242">
    <property type="term" value="F:oxygen evolving activity"/>
    <property type="evidence" value="ECO:0007669"/>
    <property type="project" value="UniProtKB-EC"/>
</dbReference>
<dbReference type="GO" id="GO:0009772">
    <property type="term" value="P:photosynthetic electron transport in photosystem II"/>
    <property type="evidence" value="ECO:0007669"/>
    <property type="project" value="InterPro"/>
</dbReference>
<dbReference type="FunFam" id="1.20.85.10:FF:000001">
    <property type="entry name" value="photosystem II D2 protein-like"/>
    <property type="match status" value="1"/>
</dbReference>
<dbReference type="Gene3D" id="1.20.85.10">
    <property type="entry name" value="Photosystem II protein D1-like"/>
    <property type="match status" value="1"/>
</dbReference>
<dbReference type="HAMAP" id="MF_01383">
    <property type="entry name" value="PSII_PsbD_D2"/>
    <property type="match status" value="1"/>
</dbReference>
<dbReference type="InterPro" id="IPR055266">
    <property type="entry name" value="D1/D2"/>
</dbReference>
<dbReference type="InterPro" id="IPR036854">
    <property type="entry name" value="Photo_II_D1/D2_sf"/>
</dbReference>
<dbReference type="InterPro" id="IPR000484">
    <property type="entry name" value="Photo_RC_L/M"/>
</dbReference>
<dbReference type="InterPro" id="IPR055265">
    <property type="entry name" value="Photo_RC_L/M_CS"/>
</dbReference>
<dbReference type="InterPro" id="IPR005868">
    <property type="entry name" value="PSII_PsbD/D2"/>
</dbReference>
<dbReference type="NCBIfam" id="TIGR01152">
    <property type="entry name" value="psbD"/>
    <property type="match status" value="1"/>
</dbReference>
<dbReference type="PANTHER" id="PTHR33149:SF12">
    <property type="entry name" value="PHOTOSYSTEM II D2 PROTEIN"/>
    <property type="match status" value="1"/>
</dbReference>
<dbReference type="PANTHER" id="PTHR33149">
    <property type="entry name" value="PHOTOSYSTEM II PROTEIN D1"/>
    <property type="match status" value="1"/>
</dbReference>
<dbReference type="Pfam" id="PF00124">
    <property type="entry name" value="Photo_RC"/>
    <property type="match status" value="1"/>
</dbReference>
<dbReference type="PRINTS" id="PR00256">
    <property type="entry name" value="REACTNCENTRE"/>
</dbReference>
<dbReference type="SUPFAM" id="SSF81483">
    <property type="entry name" value="Bacterial photosystem II reaction centre, L and M subunits"/>
    <property type="match status" value="1"/>
</dbReference>
<dbReference type="PROSITE" id="PS00244">
    <property type="entry name" value="REACTION_CENTER"/>
    <property type="match status" value="1"/>
</dbReference>
<protein>
    <recommendedName>
        <fullName evidence="1">Photosystem II D2 protein</fullName>
        <shortName evidence="1">PSII D2 protein</shortName>
        <ecNumber evidence="1">1.10.3.9</ecNumber>
    </recommendedName>
    <alternativeName>
        <fullName evidence="1">Photosystem Q(A) protein</fullName>
    </alternativeName>
</protein>
<evidence type="ECO:0000255" key="1">
    <source>
        <dbReference type="HAMAP-Rule" id="MF_01383"/>
    </source>
</evidence>
<accession>P20898</accession>
<accession>B1XIS8</accession>